<organism>
    <name type="scientific">Escherichia coli O6:K15:H31 (strain 536 / UPEC)</name>
    <dbReference type="NCBI Taxonomy" id="362663"/>
    <lineage>
        <taxon>Bacteria</taxon>
        <taxon>Pseudomonadati</taxon>
        <taxon>Pseudomonadota</taxon>
        <taxon>Gammaproteobacteria</taxon>
        <taxon>Enterobacterales</taxon>
        <taxon>Enterobacteriaceae</taxon>
        <taxon>Escherichia</taxon>
    </lineage>
</organism>
<gene>
    <name evidence="1" type="primary">smg</name>
    <name type="ordered locus">ECP_3372</name>
</gene>
<sequence>MFDVLMYLFETYIHTEAELRVDQDKLEQDLTDAGFDREDIYNALLWLEKLADYQEGLAEPMQLASDPLSMRIYTPEECERLDASCRGFLLFLEQIQVLNLETREMVIERVLALDTAEFDLEDLKWVILMVLFNIPGCENAYQQMEELLFEVNEGMLH</sequence>
<dbReference type="EMBL" id="CP000247">
    <property type="protein sequence ID" value="ABG71352.1"/>
    <property type="molecule type" value="Genomic_DNA"/>
</dbReference>
<dbReference type="RefSeq" id="WP_000460672.1">
    <property type="nucleotide sequence ID" value="NC_008253.1"/>
</dbReference>
<dbReference type="SMR" id="Q0TCH7"/>
<dbReference type="GeneID" id="86948148"/>
<dbReference type="KEGG" id="ecp:ECP_3372"/>
<dbReference type="HOGENOM" id="CLU_133242_0_0_6"/>
<dbReference type="Proteomes" id="UP000009182">
    <property type="component" value="Chromosome"/>
</dbReference>
<dbReference type="HAMAP" id="MF_00598">
    <property type="entry name" value="Smg"/>
    <property type="match status" value="1"/>
</dbReference>
<dbReference type="InterPro" id="IPR007456">
    <property type="entry name" value="Smg"/>
</dbReference>
<dbReference type="NCBIfam" id="NF002897">
    <property type="entry name" value="PRK03430.1"/>
    <property type="match status" value="1"/>
</dbReference>
<dbReference type="PANTHER" id="PTHR38692">
    <property type="entry name" value="PROTEIN SMG"/>
    <property type="match status" value="1"/>
</dbReference>
<dbReference type="PANTHER" id="PTHR38692:SF1">
    <property type="entry name" value="PROTEIN SMG"/>
    <property type="match status" value="1"/>
</dbReference>
<dbReference type="Pfam" id="PF04361">
    <property type="entry name" value="DUF494"/>
    <property type="match status" value="1"/>
</dbReference>
<comment type="similarity">
    <text evidence="1">Belongs to the Smg family.</text>
</comment>
<reference key="1">
    <citation type="journal article" date="2006" name="Mol. Microbiol.">
        <title>Role of pathogenicity island-associated integrases in the genome plasticity of uropathogenic Escherichia coli strain 536.</title>
        <authorList>
            <person name="Hochhut B."/>
            <person name="Wilde C."/>
            <person name="Balling G."/>
            <person name="Middendorf B."/>
            <person name="Dobrindt U."/>
            <person name="Brzuszkiewicz E."/>
            <person name="Gottschalk G."/>
            <person name="Carniel E."/>
            <person name="Hacker J."/>
        </authorList>
    </citation>
    <scope>NUCLEOTIDE SEQUENCE [LARGE SCALE GENOMIC DNA]</scope>
    <source>
        <strain>536 / UPEC</strain>
    </source>
</reference>
<feature type="chain" id="PRO_1000025649" description="Protein Smg">
    <location>
        <begin position="1"/>
        <end position="157"/>
    </location>
</feature>
<proteinExistence type="inferred from homology"/>
<protein>
    <recommendedName>
        <fullName evidence="1">Protein Smg</fullName>
    </recommendedName>
</protein>
<accession>Q0TCH7</accession>
<name>SMG_ECOL5</name>
<evidence type="ECO:0000255" key="1">
    <source>
        <dbReference type="HAMAP-Rule" id="MF_00598"/>
    </source>
</evidence>